<accession>P86641</accession>
<organism>
    <name type="scientific">Phasmahyla jandaia</name>
    <name type="common">Jandaia leaf frog</name>
    <name type="synonym">Phyllomedusa jandaia</name>
    <dbReference type="NCBI Taxonomy" id="762504"/>
    <lineage>
        <taxon>Eukaryota</taxon>
        <taxon>Metazoa</taxon>
        <taxon>Chordata</taxon>
        <taxon>Craniata</taxon>
        <taxon>Vertebrata</taxon>
        <taxon>Euteleostomi</taxon>
        <taxon>Amphibia</taxon>
        <taxon>Batrachia</taxon>
        <taxon>Anura</taxon>
        <taxon>Neobatrachia</taxon>
        <taxon>Hyloidea</taxon>
        <taxon>Hylidae</taxon>
        <taxon>Phyllomedusinae</taxon>
        <taxon>Phasmahyla</taxon>
    </lineage>
</organism>
<name>DMS9_PHAJA</name>
<comment type="function">
    <text evidence="1">Has antimicrobial activity.</text>
</comment>
<comment type="subcellular location">
    <subcellularLocation>
        <location evidence="3">Secreted</location>
    </subcellularLocation>
</comment>
<comment type="tissue specificity">
    <text evidence="3">Expressed by the skin glands.</text>
</comment>
<comment type="mass spectrometry"/>
<comment type="similarity">
    <text evidence="2">Belongs to the frog skin active peptide (FSAP) family. Dermaseptin subfamily.</text>
</comment>
<reference evidence="5" key="1">
    <citation type="journal article" date="2011" name="Toxicon">
        <title>Peptidomic dissection of the skin secretion of Phasmahyla jandaia (Bokermann and Sazima, 1978) (Anura, Hylidae, Phyllomedusinae).</title>
        <authorList>
            <person name="Rates B."/>
            <person name="Silva L.P."/>
            <person name="Ireno I.C."/>
            <person name="Leite F.S."/>
            <person name="Borges M.H."/>
            <person name="Bloch C. Jr."/>
            <person name="De Lima M.E."/>
            <person name="Pimenta A.M."/>
        </authorList>
    </citation>
    <scope>PROTEIN SEQUENCE</scope>
    <scope>SUBCELLULAR LOCATION</scope>
    <scope>TISSUE SPECIFICITY</scope>
    <scope>MASS SPECTROMETRY</scope>
    <source>
        <tissue evidence="3">Skin secretion</tissue>
    </source>
</reference>
<protein>
    <recommendedName>
        <fullName evidence="4">Dermaseptin-J9</fullName>
        <shortName evidence="4">DRS-J9</shortName>
    </recommendedName>
</protein>
<keyword id="KW-0878">Amphibian defense peptide</keyword>
<keyword id="KW-0044">Antibiotic</keyword>
<keyword id="KW-0929">Antimicrobial</keyword>
<keyword id="KW-0903">Direct protein sequencing</keyword>
<keyword id="KW-0964">Secreted</keyword>
<proteinExistence type="evidence at protein level"/>
<dbReference type="SMR" id="P86641"/>
<dbReference type="GO" id="GO:0005576">
    <property type="term" value="C:extracellular region"/>
    <property type="evidence" value="ECO:0007669"/>
    <property type="project" value="UniProtKB-SubCell"/>
</dbReference>
<dbReference type="GO" id="GO:0042742">
    <property type="term" value="P:defense response to bacterium"/>
    <property type="evidence" value="ECO:0007669"/>
    <property type="project" value="UniProtKB-KW"/>
</dbReference>
<dbReference type="InterPro" id="IPR022731">
    <property type="entry name" value="Dermaseptin_dom"/>
</dbReference>
<dbReference type="Pfam" id="PF12121">
    <property type="entry name" value="DD_K"/>
    <property type="match status" value="1"/>
</dbReference>
<feature type="peptide" id="PRO_0000404618" description="Dermaseptin-J9" evidence="3">
    <location>
        <begin position="1"/>
        <end position="29"/>
    </location>
</feature>
<feature type="unsure residue" description="L or I" evidence="3">
    <location>
        <position position="2"/>
    </location>
</feature>
<feature type="unsure residue" description="K or Q" evidence="3">
    <location>
        <position position="4"/>
    </location>
</feature>
<feature type="unsure residue" description="L or I" evidence="3">
    <location>
        <position position="6"/>
    </location>
</feature>
<feature type="unsure residue" description="L or I" evidence="3">
    <location>
        <position position="7"/>
    </location>
</feature>
<feature type="unsure residue" description="K or Q" evidence="3">
    <location>
        <position position="8"/>
    </location>
</feature>
<feature type="unsure residue" description="K or Q" evidence="3">
    <location>
        <position position="12"/>
    </location>
</feature>
<feature type="unsure residue" description="K or Q" evidence="3">
    <location>
        <position position="16"/>
    </location>
</feature>
<feature type="unsure residue" description="L or I" evidence="3">
    <location>
        <position position="19"/>
    </location>
</feature>
<feature type="unsure residue" description="Q or K" evidence="3">
    <location>
        <position position="28"/>
    </location>
</feature>
<sequence>GLWKSLLKNVGKAAGKAALNAVTDMVNQS</sequence>
<evidence type="ECO:0000250" key="1">
    <source>
        <dbReference type="UniProtKB" id="P84921"/>
    </source>
</evidence>
<evidence type="ECO:0000255" key="2"/>
<evidence type="ECO:0000269" key="3">
    <source>
    </source>
</evidence>
<evidence type="ECO:0000303" key="4">
    <source>
    </source>
</evidence>
<evidence type="ECO:0000305" key="5"/>